<name>RL24_DESOH</name>
<sequence length="108" mass="12342">MQKEKVNIKKNDKVKVVAGKDKGKIGKVLSVNREKNRLVVENINMIKRHTRPNVSNRQGGIIEREAPIDRSNVMLMCGKCVTPVRIKMKELEDGRKVRMCGKCKELID</sequence>
<keyword id="KW-1185">Reference proteome</keyword>
<keyword id="KW-0687">Ribonucleoprotein</keyword>
<keyword id="KW-0689">Ribosomal protein</keyword>
<keyword id="KW-0694">RNA-binding</keyword>
<keyword id="KW-0699">rRNA-binding</keyword>
<organism>
    <name type="scientific">Desulfosudis oleivorans (strain DSM 6200 / JCM 39069 / Hxd3)</name>
    <name type="common">Desulfococcus oleovorans</name>
    <dbReference type="NCBI Taxonomy" id="96561"/>
    <lineage>
        <taxon>Bacteria</taxon>
        <taxon>Pseudomonadati</taxon>
        <taxon>Thermodesulfobacteriota</taxon>
        <taxon>Desulfobacteria</taxon>
        <taxon>Desulfobacterales</taxon>
        <taxon>Desulfosudaceae</taxon>
        <taxon>Desulfosudis</taxon>
    </lineage>
</organism>
<evidence type="ECO:0000255" key="1">
    <source>
        <dbReference type="HAMAP-Rule" id="MF_01326"/>
    </source>
</evidence>
<evidence type="ECO:0000305" key="2"/>
<protein>
    <recommendedName>
        <fullName evidence="1">Large ribosomal subunit protein uL24</fullName>
    </recommendedName>
    <alternativeName>
        <fullName evidence="2">50S ribosomal protein L24</fullName>
    </alternativeName>
</protein>
<proteinExistence type="inferred from homology"/>
<reference key="1">
    <citation type="submission" date="2007-10" db="EMBL/GenBank/DDBJ databases">
        <title>Complete sequence of Desulfococcus oleovorans Hxd3.</title>
        <authorList>
            <consortium name="US DOE Joint Genome Institute"/>
            <person name="Copeland A."/>
            <person name="Lucas S."/>
            <person name="Lapidus A."/>
            <person name="Barry K."/>
            <person name="Glavina del Rio T."/>
            <person name="Dalin E."/>
            <person name="Tice H."/>
            <person name="Pitluck S."/>
            <person name="Kiss H."/>
            <person name="Brettin T."/>
            <person name="Bruce D."/>
            <person name="Detter J.C."/>
            <person name="Han C."/>
            <person name="Schmutz J."/>
            <person name="Larimer F."/>
            <person name="Land M."/>
            <person name="Hauser L."/>
            <person name="Kyrpides N."/>
            <person name="Kim E."/>
            <person name="Wawrik B."/>
            <person name="Richardson P."/>
        </authorList>
    </citation>
    <scope>NUCLEOTIDE SEQUENCE [LARGE SCALE GENOMIC DNA]</scope>
    <source>
        <strain>DSM 6200 / JCM 39069 / Hxd3</strain>
    </source>
</reference>
<dbReference type="EMBL" id="CP000859">
    <property type="protein sequence ID" value="ABW66529.1"/>
    <property type="molecule type" value="Genomic_DNA"/>
</dbReference>
<dbReference type="RefSeq" id="WP_012174147.1">
    <property type="nucleotide sequence ID" value="NC_009943.1"/>
</dbReference>
<dbReference type="SMR" id="A8ZV68"/>
<dbReference type="STRING" id="96561.Dole_0719"/>
<dbReference type="KEGG" id="dol:Dole_0719"/>
<dbReference type="eggNOG" id="COG0198">
    <property type="taxonomic scope" value="Bacteria"/>
</dbReference>
<dbReference type="HOGENOM" id="CLU_093315_2_3_7"/>
<dbReference type="OrthoDB" id="9807419at2"/>
<dbReference type="Proteomes" id="UP000008561">
    <property type="component" value="Chromosome"/>
</dbReference>
<dbReference type="GO" id="GO:1990904">
    <property type="term" value="C:ribonucleoprotein complex"/>
    <property type="evidence" value="ECO:0007669"/>
    <property type="project" value="UniProtKB-KW"/>
</dbReference>
<dbReference type="GO" id="GO:0005840">
    <property type="term" value="C:ribosome"/>
    <property type="evidence" value="ECO:0007669"/>
    <property type="project" value="UniProtKB-KW"/>
</dbReference>
<dbReference type="GO" id="GO:0019843">
    <property type="term" value="F:rRNA binding"/>
    <property type="evidence" value="ECO:0007669"/>
    <property type="project" value="UniProtKB-UniRule"/>
</dbReference>
<dbReference type="GO" id="GO:0003735">
    <property type="term" value="F:structural constituent of ribosome"/>
    <property type="evidence" value="ECO:0007669"/>
    <property type="project" value="InterPro"/>
</dbReference>
<dbReference type="GO" id="GO:0006412">
    <property type="term" value="P:translation"/>
    <property type="evidence" value="ECO:0007669"/>
    <property type="project" value="UniProtKB-UniRule"/>
</dbReference>
<dbReference type="CDD" id="cd06089">
    <property type="entry name" value="KOW_RPL26"/>
    <property type="match status" value="1"/>
</dbReference>
<dbReference type="Gene3D" id="2.30.30.30">
    <property type="match status" value="1"/>
</dbReference>
<dbReference type="HAMAP" id="MF_01326_B">
    <property type="entry name" value="Ribosomal_uL24_B"/>
    <property type="match status" value="1"/>
</dbReference>
<dbReference type="InterPro" id="IPR005824">
    <property type="entry name" value="KOW"/>
</dbReference>
<dbReference type="InterPro" id="IPR014722">
    <property type="entry name" value="Rib_uL2_dom2"/>
</dbReference>
<dbReference type="InterPro" id="IPR003256">
    <property type="entry name" value="Ribosomal_uL24"/>
</dbReference>
<dbReference type="InterPro" id="IPR005825">
    <property type="entry name" value="Ribosomal_uL24_CS"/>
</dbReference>
<dbReference type="InterPro" id="IPR041988">
    <property type="entry name" value="Ribosomal_uL24_KOW"/>
</dbReference>
<dbReference type="InterPro" id="IPR008991">
    <property type="entry name" value="Translation_prot_SH3-like_sf"/>
</dbReference>
<dbReference type="NCBIfam" id="TIGR01079">
    <property type="entry name" value="rplX_bact"/>
    <property type="match status" value="1"/>
</dbReference>
<dbReference type="PANTHER" id="PTHR12903">
    <property type="entry name" value="MITOCHONDRIAL RIBOSOMAL PROTEIN L24"/>
    <property type="match status" value="1"/>
</dbReference>
<dbReference type="Pfam" id="PF00467">
    <property type="entry name" value="KOW"/>
    <property type="match status" value="1"/>
</dbReference>
<dbReference type="Pfam" id="PF17136">
    <property type="entry name" value="ribosomal_L24"/>
    <property type="match status" value="1"/>
</dbReference>
<dbReference type="SMART" id="SM00739">
    <property type="entry name" value="KOW"/>
    <property type="match status" value="1"/>
</dbReference>
<dbReference type="SUPFAM" id="SSF50104">
    <property type="entry name" value="Translation proteins SH3-like domain"/>
    <property type="match status" value="1"/>
</dbReference>
<dbReference type="PROSITE" id="PS01108">
    <property type="entry name" value="RIBOSOMAL_L24"/>
    <property type="match status" value="1"/>
</dbReference>
<feature type="chain" id="PRO_0000355675" description="Large ribosomal subunit protein uL24">
    <location>
        <begin position="1"/>
        <end position="108"/>
    </location>
</feature>
<gene>
    <name evidence="1" type="primary">rplX</name>
    <name type="ordered locus">Dole_0719</name>
</gene>
<comment type="function">
    <text evidence="1">One of two assembly initiator proteins, it binds directly to the 5'-end of the 23S rRNA, where it nucleates assembly of the 50S subunit.</text>
</comment>
<comment type="function">
    <text evidence="1">One of the proteins that surrounds the polypeptide exit tunnel on the outside of the subunit.</text>
</comment>
<comment type="subunit">
    <text evidence="1">Part of the 50S ribosomal subunit.</text>
</comment>
<comment type="similarity">
    <text evidence="1">Belongs to the universal ribosomal protein uL24 family.</text>
</comment>
<accession>A8ZV68</accession>